<gene>
    <name evidence="1" type="primary">ATbp</name>
    <name type="ORF">GH24797</name>
</gene>
<reference evidence="4" key="1">
    <citation type="journal article" date="2007" name="Nature">
        <title>Evolution of genes and genomes on the Drosophila phylogeny.</title>
        <authorList>
            <consortium name="Drosophila 12 genomes consortium"/>
        </authorList>
    </citation>
    <scope>NUCLEOTIDE SEQUENCE [LARGE SCALE GENOMIC DNA]</scope>
    <source>
        <strain evidence="4">Tucson 15287-2541.00</strain>
    </source>
</reference>
<organism>
    <name type="scientific">Drosophila grimshawi</name>
    <name type="common">Hawaiian fruit fly</name>
    <name type="synonym">Idiomyia grimshawi</name>
    <dbReference type="NCBI Taxonomy" id="7222"/>
    <lineage>
        <taxon>Eukaryota</taxon>
        <taxon>Metazoa</taxon>
        <taxon>Ecdysozoa</taxon>
        <taxon>Arthropoda</taxon>
        <taxon>Hexapoda</taxon>
        <taxon>Insecta</taxon>
        <taxon>Pterygota</taxon>
        <taxon>Neoptera</taxon>
        <taxon>Endopterygota</taxon>
        <taxon>Diptera</taxon>
        <taxon>Brachycera</taxon>
        <taxon>Muscomorpha</taxon>
        <taxon>Ephydroidea</taxon>
        <taxon>Drosophilidae</taxon>
        <taxon>Drosophila</taxon>
        <taxon>Hawaiian Drosophila</taxon>
    </lineage>
</organism>
<accession>B4JND4</accession>
<comment type="function">
    <text evidence="1">May be a transcription factor for genes having (A+T) stretches in their promoter and/or enhancer regions. Binds to AT rich DNA (By similarity).</text>
</comment>
<comment type="subcellular location">
    <subcellularLocation>
        <location evidence="1">Nucleus</location>
    </subcellularLocation>
</comment>
<feature type="chain" id="PRO_0000378613" description="AT-rich binding protein">
    <location>
        <begin position="1"/>
        <end position="419"/>
    </location>
</feature>
<feature type="zinc finger region" description="C2H2-type 1" evidence="2">
    <location>
        <begin position="29"/>
        <end position="52"/>
    </location>
</feature>
<feature type="zinc finger region" description="C2H2-type 2" evidence="2">
    <location>
        <begin position="352"/>
        <end position="376"/>
    </location>
</feature>
<feature type="zinc finger region" description="C2H2-type 3" evidence="2">
    <location>
        <begin position="382"/>
        <end position="405"/>
    </location>
</feature>
<feature type="region of interest" description="Disordered" evidence="3">
    <location>
        <begin position="121"/>
        <end position="179"/>
    </location>
</feature>
<feature type="compositionally biased region" description="Low complexity" evidence="3">
    <location>
        <begin position="126"/>
        <end position="149"/>
    </location>
</feature>
<feature type="compositionally biased region" description="Low complexity" evidence="3">
    <location>
        <begin position="156"/>
        <end position="173"/>
    </location>
</feature>
<dbReference type="EMBL" id="CH916371">
    <property type="protein sequence ID" value="EDV92227.1"/>
    <property type="molecule type" value="Genomic_DNA"/>
</dbReference>
<dbReference type="FunCoup" id="B4JND4">
    <property type="interactions" value="26"/>
</dbReference>
<dbReference type="EnsemblMetazoa" id="FBtr0160211">
    <property type="protein sequence ID" value="FBpp0158703"/>
    <property type="gene ID" value="FBgn0132252"/>
</dbReference>
<dbReference type="EnsemblMetazoa" id="XM_001992484.2">
    <property type="protein sequence ID" value="XP_001992520.1"/>
    <property type="gene ID" value="LOC6565897"/>
</dbReference>
<dbReference type="GeneID" id="6565897"/>
<dbReference type="KEGG" id="dgr:6565897"/>
<dbReference type="eggNOG" id="KOG1721">
    <property type="taxonomic scope" value="Eukaryota"/>
</dbReference>
<dbReference type="HOGENOM" id="CLU_712250_0_0_1"/>
<dbReference type="InParanoid" id="B4JND4"/>
<dbReference type="OMA" id="ERWYICD"/>
<dbReference type="OrthoDB" id="3437960at2759"/>
<dbReference type="PhylomeDB" id="B4JND4"/>
<dbReference type="Proteomes" id="UP000001070">
    <property type="component" value="Unassembled WGS sequence"/>
</dbReference>
<dbReference type="GO" id="GO:0005634">
    <property type="term" value="C:nucleus"/>
    <property type="evidence" value="ECO:0007669"/>
    <property type="project" value="UniProtKB-SubCell"/>
</dbReference>
<dbReference type="GO" id="GO:0003677">
    <property type="term" value="F:DNA binding"/>
    <property type="evidence" value="ECO:0007669"/>
    <property type="project" value="UniProtKB-KW"/>
</dbReference>
<dbReference type="GO" id="GO:0008270">
    <property type="term" value="F:zinc ion binding"/>
    <property type="evidence" value="ECO:0007669"/>
    <property type="project" value="UniProtKB-KW"/>
</dbReference>
<dbReference type="GO" id="GO:0006357">
    <property type="term" value="P:regulation of transcription by RNA polymerase II"/>
    <property type="evidence" value="ECO:0000250"/>
    <property type="project" value="UniProtKB"/>
</dbReference>
<dbReference type="Gene3D" id="3.30.160.60">
    <property type="entry name" value="Classic Zinc Finger"/>
    <property type="match status" value="2"/>
</dbReference>
<dbReference type="InterPro" id="IPR050331">
    <property type="entry name" value="Zinc_finger"/>
</dbReference>
<dbReference type="InterPro" id="IPR036236">
    <property type="entry name" value="Znf_C2H2_sf"/>
</dbReference>
<dbReference type="InterPro" id="IPR013087">
    <property type="entry name" value="Znf_C2H2_type"/>
</dbReference>
<dbReference type="PANTHER" id="PTHR16515:SF49">
    <property type="entry name" value="GASTRULA ZINC FINGER PROTEIN XLCGF49.1-LIKE-RELATED"/>
    <property type="match status" value="1"/>
</dbReference>
<dbReference type="PANTHER" id="PTHR16515">
    <property type="entry name" value="PR DOMAIN ZINC FINGER PROTEIN"/>
    <property type="match status" value="1"/>
</dbReference>
<dbReference type="SMART" id="SM00355">
    <property type="entry name" value="ZnF_C2H2"/>
    <property type="match status" value="3"/>
</dbReference>
<dbReference type="SUPFAM" id="SSF57667">
    <property type="entry name" value="beta-beta-alpha zinc fingers"/>
    <property type="match status" value="1"/>
</dbReference>
<dbReference type="PROSITE" id="PS00028">
    <property type="entry name" value="ZINC_FINGER_C2H2_1"/>
    <property type="match status" value="3"/>
</dbReference>
<dbReference type="PROSITE" id="PS50157">
    <property type="entry name" value="ZINC_FINGER_C2H2_2"/>
    <property type="match status" value="2"/>
</dbReference>
<proteinExistence type="inferred from homology"/>
<name>ATBP_DROGR</name>
<evidence type="ECO:0000250" key="1">
    <source>
        <dbReference type="UniProtKB" id="Q86P48"/>
    </source>
</evidence>
<evidence type="ECO:0000255" key="2">
    <source>
        <dbReference type="PROSITE-ProRule" id="PRU00042"/>
    </source>
</evidence>
<evidence type="ECO:0000256" key="3">
    <source>
        <dbReference type="SAM" id="MobiDB-lite"/>
    </source>
</evidence>
<evidence type="ECO:0000312" key="4">
    <source>
        <dbReference type="EMBL" id="EDV92227.1"/>
    </source>
</evidence>
<keyword id="KW-0238">DNA-binding</keyword>
<keyword id="KW-0479">Metal-binding</keyword>
<keyword id="KW-0539">Nucleus</keyword>
<keyword id="KW-1185">Reference proteome</keyword>
<keyword id="KW-0677">Repeat</keyword>
<keyword id="KW-0804">Transcription</keyword>
<keyword id="KW-0805">Transcription regulation</keyword>
<keyword id="KW-0862">Zinc</keyword>
<keyword id="KW-0863">Zinc-finger</keyword>
<sequence length="419" mass="44985">MGFPRILSKNHKIYTKLGEFCLSGDSFWIVCHTCQEELQTQDAFWKHIQDEHNFLHGVAKQEHNRSSSSSYCLADVESASAVTSNTTSVQTAGNVTTVAVPVALYKYTEDEQRDVAAAVELHEAQHQQQQQQQQHQQQQQQQQHQQQQQHQHHQHQQQQQHLHQQQQQQQQQQRDAAKELAELHAVAAAAAAAGGGGGDSSAHSSSIGGGIDIKVELTPEMQVAAAAAAAASSNTTIYHLSQVVPVSAPAPPPPPPTAAAASSFLSGGAGSATAATIVGVSTTATTTAAAAAAVTTVPQQSQLGSGNNAGAVMQQLGLPLIAVAQELAPKDSNSTTASASSAVSSDDGERWYVCDYGTCGIKFKYKSRMELHRVVHSKERRFNCDMCSASFKQSCNLSTHRKKKHSLRGIKSDLLPQRF</sequence>
<protein>
    <recommendedName>
        <fullName evidence="1">AT-rich binding protein</fullName>
    </recommendedName>
</protein>